<accession>Q83LF7</accession>
<accession>Q7C201</accession>
<dbReference type="EC" id="2.8.1.13" evidence="1"/>
<dbReference type="EMBL" id="AE005674">
    <property type="protein sequence ID" value="AAN42769.1"/>
    <property type="status" value="ALT_INIT"/>
    <property type="molecule type" value="Genomic_DNA"/>
</dbReference>
<dbReference type="EMBL" id="AE014073">
    <property type="protein sequence ID" value="AAP16658.1"/>
    <property type="status" value="ALT_INIT"/>
    <property type="molecule type" value="Genomic_DNA"/>
</dbReference>
<dbReference type="RefSeq" id="WP_005047976.1">
    <property type="nucleotide sequence ID" value="NZ_WPGW01000001.1"/>
</dbReference>
<dbReference type="SMR" id="Q83LF7"/>
<dbReference type="STRING" id="198214.SF1152"/>
<dbReference type="PaxDb" id="198214-SF1152"/>
<dbReference type="KEGG" id="sfl:SF1152"/>
<dbReference type="KEGG" id="sfx:S1235"/>
<dbReference type="PATRIC" id="fig|198214.7.peg.1353"/>
<dbReference type="HOGENOM" id="CLU_035188_1_0_6"/>
<dbReference type="Proteomes" id="UP000001006">
    <property type="component" value="Chromosome"/>
</dbReference>
<dbReference type="Proteomes" id="UP000002673">
    <property type="component" value="Chromosome"/>
</dbReference>
<dbReference type="GO" id="GO:0005737">
    <property type="term" value="C:cytoplasm"/>
    <property type="evidence" value="ECO:0007669"/>
    <property type="project" value="UniProtKB-SubCell"/>
</dbReference>
<dbReference type="GO" id="GO:0005524">
    <property type="term" value="F:ATP binding"/>
    <property type="evidence" value="ECO:0007669"/>
    <property type="project" value="UniProtKB-KW"/>
</dbReference>
<dbReference type="GO" id="GO:0000049">
    <property type="term" value="F:tRNA binding"/>
    <property type="evidence" value="ECO:0007669"/>
    <property type="project" value="UniProtKB-KW"/>
</dbReference>
<dbReference type="GO" id="GO:0103016">
    <property type="term" value="F:tRNA-uridine 2-sulfurtransferase activity"/>
    <property type="evidence" value="ECO:0007669"/>
    <property type="project" value="UniProtKB-EC"/>
</dbReference>
<dbReference type="GO" id="GO:0002143">
    <property type="term" value="P:tRNA wobble position uridine thiolation"/>
    <property type="evidence" value="ECO:0007669"/>
    <property type="project" value="TreeGrafter"/>
</dbReference>
<dbReference type="CDD" id="cd01998">
    <property type="entry name" value="MnmA_TRMU-like"/>
    <property type="match status" value="1"/>
</dbReference>
<dbReference type="FunFam" id="2.30.30.280:FF:000001">
    <property type="entry name" value="tRNA-specific 2-thiouridylase MnmA"/>
    <property type="match status" value="1"/>
</dbReference>
<dbReference type="FunFam" id="2.40.30.10:FF:000023">
    <property type="entry name" value="tRNA-specific 2-thiouridylase MnmA"/>
    <property type="match status" value="1"/>
</dbReference>
<dbReference type="FunFam" id="3.40.50.620:FF:000004">
    <property type="entry name" value="tRNA-specific 2-thiouridylase MnmA"/>
    <property type="match status" value="1"/>
</dbReference>
<dbReference type="Gene3D" id="2.30.30.280">
    <property type="entry name" value="Adenine nucleotide alpha hydrolases-like domains"/>
    <property type="match status" value="1"/>
</dbReference>
<dbReference type="Gene3D" id="3.40.50.620">
    <property type="entry name" value="HUPs"/>
    <property type="match status" value="1"/>
</dbReference>
<dbReference type="Gene3D" id="2.40.30.10">
    <property type="entry name" value="Translation factors"/>
    <property type="match status" value="1"/>
</dbReference>
<dbReference type="HAMAP" id="MF_00144">
    <property type="entry name" value="tRNA_thiouridyl_MnmA"/>
    <property type="match status" value="1"/>
</dbReference>
<dbReference type="InterPro" id="IPR004506">
    <property type="entry name" value="MnmA-like"/>
</dbReference>
<dbReference type="InterPro" id="IPR046885">
    <property type="entry name" value="MnmA-like_C"/>
</dbReference>
<dbReference type="InterPro" id="IPR046884">
    <property type="entry name" value="MnmA-like_central"/>
</dbReference>
<dbReference type="InterPro" id="IPR023382">
    <property type="entry name" value="MnmA-like_central_sf"/>
</dbReference>
<dbReference type="InterPro" id="IPR014729">
    <property type="entry name" value="Rossmann-like_a/b/a_fold"/>
</dbReference>
<dbReference type="NCBIfam" id="NF001138">
    <property type="entry name" value="PRK00143.1"/>
    <property type="match status" value="1"/>
</dbReference>
<dbReference type="NCBIfam" id="TIGR00420">
    <property type="entry name" value="trmU"/>
    <property type="match status" value="1"/>
</dbReference>
<dbReference type="PANTHER" id="PTHR11933:SF5">
    <property type="entry name" value="MITOCHONDRIAL TRNA-SPECIFIC 2-THIOURIDYLASE 1"/>
    <property type="match status" value="1"/>
</dbReference>
<dbReference type="PANTHER" id="PTHR11933">
    <property type="entry name" value="TRNA 5-METHYLAMINOMETHYL-2-THIOURIDYLATE -METHYLTRANSFERASE"/>
    <property type="match status" value="1"/>
</dbReference>
<dbReference type="Pfam" id="PF03054">
    <property type="entry name" value="tRNA_Me_trans"/>
    <property type="match status" value="1"/>
</dbReference>
<dbReference type="Pfam" id="PF20258">
    <property type="entry name" value="tRNA_Me_trans_C"/>
    <property type="match status" value="1"/>
</dbReference>
<dbReference type="Pfam" id="PF20259">
    <property type="entry name" value="tRNA_Me_trans_M"/>
    <property type="match status" value="1"/>
</dbReference>
<dbReference type="SUPFAM" id="SSF52402">
    <property type="entry name" value="Adenine nucleotide alpha hydrolases-like"/>
    <property type="match status" value="1"/>
</dbReference>
<organism>
    <name type="scientific">Shigella flexneri</name>
    <dbReference type="NCBI Taxonomy" id="623"/>
    <lineage>
        <taxon>Bacteria</taxon>
        <taxon>Pseudomonadati</taxon>
        <taxon>Pseudomonadota</taxon>
        <taxon>Gammaproteobacteria</taxon>
        <taxon>Enterobacterales</taxon>
        <taxon>Enterobacteriaceae</taxon>
        <taxon>Shigella</taxon>
    </lineage>
</organism>
<gene>
    <name evidence="1" type="primary">mnmA</name>
    <name type="ordered locus">SF1152</name>
    <name type="ordered locus">S1235</name>
</gene>
<keyword id="KW-0067">ATP-binding</keyword>
<keyword id="KW-0963">Cytoplasm</keyword>
<keyword id="KW-1015">Disulfide bond</keyword>
<keyword id="KW-0547">Nucleotide-binding</keyword>
<keyword id="KW-1185">Reference proteome</keyword>
<keyword id="KW-0694">RNA-binding</keyword>
<keyword id="KW-0808">Transferase</keyword>
<keyword id="KW-0819">tRNA processing</keyword>
<keyword id="KW-0820">tRNA-binding</keyword>
<comment type="function">
    <text evidence="1">Catalyzes the 2-thiolation of uridine at the wobble position (U34) of tRNA(Lys), tRNA(Glu) and tRNA(Gln), leading to the formation of s(2)U34, the first step of tRNA-mnm(5)s(2)U34 synthesis. Sulfur is provided by IscS, via a sulfur-relay system. Binds ATP and its substrate tRNAs.</text>
</comment>
<comment type="catalytic activity">
    <reaction evidence="1">
        <text>S-sulfanyl-L-cysteinyl-[protein] + uridine(34) in tRNA + AH2 + ATP = 2-thiouridine(34) in tRNA + L-cysteinyl-[protein] + A + AMP + diphosphate + H(+)</text>
        <dbReference type="Rhea" id="RHEA:47032"/>
        <dbReference type="Rhea" id="RHEA-COMP:10131"/>
        <dbReference type="Rhea" id="RHEA-COMP:11726"/>
        <dbReference type="Rhea" id="RHEA-COMP:11727"/>
        <dbReference type="Rhea" id="RHEA-COMP:11728"/>
        <dbReference type="ChEBI" id="CHEBI:13193"/>
        <dbReference type="ChEBI" id="CHEBI:15378"/>
        <dbReference type="ChEBI" id="CHEBI:17499"/>
        <dbReference type="ChEBI" id="CHEBI:29950"/>
        <dbReference type="ChEBI" id="CHEBI:30616"/>
        <dbReference type="ChEBI" id="CHEBI:33019"/>
        <dbReference type="ChEBI" id="CHEBI:61963"/>
        <dbReference type="ChEBI" id="CHEBI:65315"/>
        <dbReference type="ChEBI" id="CHEBI:87170"/>
        <dbReference type="ChEBI" id="CHEBI:456215"/>
        <dbReference type="EC" id="2.8.1.13"/>
    </reaction>
</comment>
<comment type="subunit">
    <text evidence="1">Interacts with TusE.</text>
</comment>
<comment type="subcellular location">
    <subcellularLocation>
        <location evidence="1">Cytoplasm</location>
    </subcellularLocation>
</comment>
<comment type="similarity">
    <text evidence="1">Belongs to the MnmA/TRMU family.</text>
</comment>
<comment type="sequence caution" evidence="2">
    <conflict type="erroneous initiation">
        <sequence resource="EMBL-CDS" id="AAN42769"/>
    </conflict>
</comment>
<comment type="sequence caution" evidence="2">
    <conflict type="erroneous initiation">
        <sequence resource="EMBL-CDS" id="AAP16658"/>
    </conflict>
</comment>
<evidence type="ECO:0000255" key="1">
    <source>
        <dbReference type="HAMAP-Rule" id="MF_00144"/>
    </source>
</evidence>
<evidence type="ECO:0000305" key="2"/>
<sequence length="368" mass="40958">MSETAKKVIVGMSGGVDSSVSAWLLQQQGYQVEGLFMKNWEEDDGEEYCTAAADLADAQAVCDKLGIELHTVNFAAEYWDNVFELFLAEYKAGRTPNPDILCNKEIKFKAFLEFAAEDLGADYIATGHYVRRADVDGKSRLLRGLDSNKDQSYFLYTLSHEQIAQSLFPVGELEKPQVRKIAEDLGLVTAKKKDSTGICFIGERKFREFLGRYLPAQPGKIITVDGDEIGEHQGLMYHTLGQRKGLGIGGTKEGTEEPWYVVDKDVENNILVVAQGHEHPRLMSVGLIAQQLHWVDREPFTGTMRCTVKTRYRQTDIPCTVKALDDDRIKVIFDEPVAAVTPGQSAVFYNGEVCLGGGIIEQRLPLPV</sequence>
<reference key="1">
    <citation type="journal article" date="2002" name="Nucleic Acids Res.">
        <title>Genome sequence of Shigella flexneri 2a: insights into pathogenicity through comparison with genomes of Escherichia coli K12 and O157.</title>
        <authorList>
            <person name="Jin Q."/>
            <person name="Yuan Z."/>
            <person name="Xu J."/>
            <person name="Wang Y."/>
            <person name="Shen Y."/>
            <person name="Lu W."/>
            <person name="Wang J."/>
            <person name="Liu H."/>
            <person name="Yang J."/>
            <person name="Yang F."/>
            <person name="Zhang X."/>
            <person name="Zhang J."/>
            <person name="Yang G."/>
            <person name="Wu H."/>
            <person name="Qu D."/>
            <person name="Dong J."/>
            <person name="Sun L."/>
            <person name="Xue Y."/>
            <person name="Zhao A."/>
            <person name="Gao Y."/>
            <person name="Zhu J."/>
            <person name="Kan B."/>
            <person name="Ding K."/>
            <person name="Chen S."/>
            <person name="Cheng H."/>
            <person name="Yao Z."/>
            <person name="He B."/>
            <person name="Chen R."/>
            <person name="Ma D."/>
            <person name="Qiang B."/>
            <person name="Wen Y."/>
            <person name="Hou Y."/>
            <person name="Yu J."/>
        </authorList>
    </citation>
    <scope>NUCLEOTIDE SEQUENCE [LARGE SCALE GENOMIC DNA]</scope>
    <source>
        <strain>301 / Serotype 2a</strain>
    </source>
</reference>
<reference key="2">
    <citation type="journal article" date="2003" name="Infect. Immun.">
        <title>Complete genome sequence and comparative genomics of Shigella flexneri serotype 2a strain 2457T.</title>
        <authorList>
            <person name="Wei J."/>
            <person name="Goldberg M.B."/>
            <person name="Burland V."/>
            <person name="Venkatesan M.M."/>
            <person name="Deng W."/>
            <person name="Fournier G."/>
            <person name="Mayhew G.F."/>
            <person name="Plunkett G. III"/>
            <person name="Rose D.J."/>
            <person name="Darling A."/>
            <person name="Mau B."/>
            <person name="Perna N.T."/>
            <person name="Payne S.M."/>
            <person name="Runyen-Janecky L.J."/>
            <person name="Zhou S."/>
            <person name="Schwartz D.C."/>
            <person name="Blattner F.R."/>
        </authorList>
    </citation>
    <scope>NUCLEOTIDE SEQUENCE [LARGE SCALE GENOMIC DNA]</scope>
    <source>
        <strain>ATCC 700930 / 2457T / Serotype 2a</strain>
    </source>
</reference>
<feature type="chain" id="PRO_0000349798" description="tRNA-specific 2-thiouridylase MnmA">
    <location>
        <begin position="1"/>
        <end position="368"/>
    </location>
</feature>
<feature type="region of interest" description="Interaction with target base in tRNA" evidence="1">
    <location>
        <begin position="97"/>
        <end position="99"/>
    </location>
</feature>
<feature type="region of interest" description="Interaction with tRNA" evidence="1">
    <location>
        <begin position="149"/>
        <end position="151"/>
    </location>
</feature>
<feature type="region of interest" description="Interaction with tRNA" evidence="1">
    <location>
        <begin position="311"/>
        <end position="312"/>
    </location>
</feature>
<feature type="active site" description="Nucleophile" evidence="1">
    <location>
        <position position="102"/>
    </location>
</feature>
<feature type="active site" description="Cysteine persulfide intermediate" evidence="1">
    <location>
        <position position="199"/>
    </location>
</feature>
<feature type="binding site" evidence="1">
    <location>
        <begin position="11"/>
        <end position="18"/>
    </location>
    <ligand>
        <name>ATP</name>
        <dbReference type="ChEBI" id="CHEBI:30616"/>
    </ligand>
</feature>
<feature type="binding site" evidence="1">
    <location>
        <position position="37"/>
    </location>
    <ligand>
        <name>ATP</name>
        <dbReference type="ChEBI" id="CHEBI:30616"/>
    </ligand>
</feature>
<feature type="binding site" evidence="1">
    <location>
        <position position="127"/>
    </location>
    <ligand>
        <name>ATP</name>
        <dbReference type="ChEBI" id="CHEBI:30616"/>
    </ligand>
</feature>
<feature type="site" description="Interaction with tRNA" evidence="1">
    <location>
        <position position="128"/>
    </location>
</feature>
<feature type="site" description="Interaction with tRNA" evidence="1">
    <location>
        <position position="344"/>
    </location>
</feature>
<feature type="disulfide bond" description="Alternate" evidence="1">
    <location>
        <begin position="102"/>
        <end position="199"/>
    </location>
</feature>
<proteinExistence type="inferred from homology"/>
<protein>
    <recommendedName>
        <fullName evidence="1">tRNA-specific 2-thiouridylase MnmA</fullName>
        <ecNumber evidence="1">2.8.1.13</ecNumber>
    </recommendedName>
</protein>
<name>MNMA_SHIFL</name>